<keyword id="KW-0963">Cytoplasm</keyword>
<keyword id="KW-0324">Glycolysis</keyword>
<keyword id="KW-0456">Lyase</keyword>
<keyword id="KW-0460">Magnesium</keyword>
<keyword id="KW-0479">Metal-binding</keyword>
<keyword id="KW-0964">Secreted</keyword>
<evidence type="ECO:0000255" key="1">
    <source>
        <dbReference type="HAMAP-Rule" id="MF_00318"/>
    </source>
</evidence>
<protein>
    <recommendedName>
        <fullName evidence="1">Enolase</fullName>
        <ecNumber evidence="1">4.2.1.11</ecNumber>
    </recommendedName>
    <alternativeName>
        <fullName evidence="1">2-phospho-D-glycerate hydro-lyase</fullName>
    </alternativeName>
    <alternativeName>
        <fullName evidence="1">2-phosphoglycerate dehydratase</fullName>
    </alternativeName>
</protein>
<dbReference type="EC" id="4.2.1.11" evidence="1"/>
<dbReference type="EMBL" id="AM260522">
    <property type="protein sequence ID" value="CAJ99176.1"/>
    <property type="molecule type" value="Genomic_DNA"/>
</dbReference>
<dbReference type="RefSeq" id="WP_011577291.1">
    <property type="nucleotide sequence ID" value="NC_008229.1"/>
</dbReference>
<dbReference type="SMR" id="Q17YV0"/>
<dbReference type="STRING" id="382638.Hac_0337"/>
<dbReference type="GeneID" id="31757848"/>
<dbReference type="KEGG" id="hac:Hac_0337"/>
<dbReference type="eggNOG" id="COG0148">
    <property type="taxonomic scope" value="Bacteria"/>
</dbReference>
<dbReference type="HOGENOM" id="CLU_031223_2_1_7"/>
<dbReference type="OrthoDB" id="9804716at2"/>
<dbReference type="BioCyc" id="HACI382638:HAC_RS01510-MONOMER"/>
<dbReference type="UniPathway" id="UPA00109">
    <property type="reaction ID" value="UER00187"/>
</dbReference>
<dbReference type="Proteomes" id="UP000000775">
    <property type="component" value="Chromosome"/>
</dbReference>
<dbReference type="GO" id="GO:0009986">
    <property type="term" value="C:cell surface"/>
    <property type="evidence" value="ECO:0007669"/>
    <property type="project" value="UniProtKB-SubCell"/>
</dbReference>
<dbReference type="GO" id="GO:0005576">
    <property type="term" value="C:extracellular region"/>
    <property type="evidence" value="ECO:0007669"/>
    <property type="project" value="UniProtKB-SubCell"/>
</dbReference>
<dbReference type="GO" id="GO:0000015">
    <property type="term" value="C:phosphopyruvate hydratase complex"/>
    <property type="evidence" value="ECO:0007669"/>
    <property type="project" value="InterPro"/>
</dbReference>
<dbReference type="GO" id="GO:0000287">
    <property type="term" value="F:magnesium ion binding"/>
    <property type="evidence" value="ECO:0007669"/>
    <property type="project" value="UniProtKB-UniRule"/>
</dbReference>
<dbReference type="GO" id="GO:0004634">
    <property type="term" value="F:phosphopyruvate hydratase activity"/>
    <property type="evidence" value="ECO:0007669"/>
    <property type="project" value="UniProtKB-UniRule"/>
</dbReference>
<dbReference type="GO" id="GO:0006096">
    <property type="term" value="P:glycolytic process"/>
    <property type="evidence" value="ECO:0007669"/>
    <property type="project" value="UniProtKB-UniRule"/>
</dbReference>
<dbReference type="CDD" id="cd03313">
    <property type="entry name" value="enolase"/>
    <property type="match status" value="1"/>
</dbReference>
<dbReference type="Gene3D" id="3.20.20.120">
    <property type="entry name" value="Enolase-like C-terminal domain"/>
    <property type="match status" value="1"/>
</dbReference>
<dbReference type="Gene3D" id="3.30.390.10">
    <property type="entry name" value="Enolase-like, N-terminal domain"/>
    <property type="match status" value="1"/>
</dbReference>
<dbReference type="HAMAP" id="MF_00318">
    <property type="entry name" value="Enolase"/>
    <property type="match status" value="1"/>
</dbReference>
<dbReference type="InterPro" id="IPR000941">
    <property type="entry name" value="Enolase"/>
</dbReference>
<dbReference type="InterPro" id="IPR036849">
    <property type="entry name" value="Enolase-like_C_sf"/>
</dbReference>
<dbReference type="InterPro" id="IPR029017">
    <property type="entry name" value="Enolase-like_N"/>
</dbReference>
<dbReference type="InterPro" id="IPR020810">
    <property type="entry name" value="Enolase_C"/>
</dbReference>
<dbReference type="InterPro" id="IPR020809">
    <property type="entry name" value="Enolase_CS"/>
</dbReference>
<dbReference type="InterPro" id="IPR020811">
    <property type="entry name" value="Enolase_N"/>
</dbReference>
<dbReference type="NCBIfam" id="TIGR01060">
    <property type="entry name" value="eno"/>
    <property type="match status" value="1"/>
</dbReference>
<dbReference type="PANTHER" id="PTHR11902">
    <property type="entry name" value="ENOLASE"/>
    <property type="match status" value="1"/>
</dbReference>
<dbReference type="PANTHER" id="PTHR11902:SF1">
    <property type="entry name" value="ENOLASE"/>
    <property type="match status" value="1"/>
</dbReference>
<dbReference type="Pfam" id="PF00113">
    <property type="entry name" value="Enolase_C"/>
    <property type="match status" value="1"/>
</dbReference>
<dbReference type="Pfam" id="PF03952">
    <property type="entry name" value="Enolase_N"/>
    <property type="match status" value="1"/>
</dbReference>
<dbReference type="PIRSF" id="PIRSF001400">
    <property type="entry name" value="Enolase"/>
    <property type="match status" value="1"/>
</dbReference>
<dbReference type="PRINTS" id="PR00148">
    <property type="entry name" value="ENOLASE"/>
</dbReference>
<dbReference type="SFLD" id="SFLDS00001">
    <property type="entry name" value="Enolase"/>
    <property type="match status" value="1"/>
</dbReference>
<dbReference type="SFLD" id="SFLDF00002">
    <property type="entry name" value="enolase"/>
    <property type="match status" value="1"/>
</dbReference>
<dbReference type="SMART" id="SM01192">
    <property type="entry name" value="Enolase_C"/>
    <property type="match status" value="1"/>
</dbReference>
<dbReference type="SMART" id="SM01193">
    <property type="entry name" value="Enolase_N"/>
    <property type="match status" value="1"/>
</dbReference>
<dbReference type="SUPFAM" id="SSF51604">
    <property type="entry name" value="Enolase C-terminal domain-like"/>
    <property type="match status" value="1"/>
</dbReference>
<dbReference type="SUPFAM" id="SSF54826">
    <property type="entry name" value="Enolase N-terminal domain-like"/>
    <property type="match status" value="1"/>
</dbReference>
<dbReference type="PROSITE" id="PS00164">
    <property type="entry name" value="ENOLASE"/>
    <property type="match status" value="1"/>
</dbReference>
<proteinExistence type="inferred from homology"/>
<feature type="chain" id="PRO_0000280851" description="Enolase">
    <location>
        <begin position="1"/>
        <end position="426"/>
    </location>
</feature>
<feature type="active site" description="Proton donor" evidence="1">
    <location>
        <position position="205"/>
    </location>
</feature>
<feature type="active site" description="Proton acceptor" evidence="1">
    <location>
        <position position="338"/>
    </location>
</feature>
<feature type="binding site" evidence="1">
    <location>
        <position position="163"/>
    </location>
    <ligand>
        <name>(2R)-2-phosphoglycerate</name>
        <dbReference type="ChEBI" id="CHEBI:58289"/>
    </ligand>
</feature>
<feature type="binding site" evidence="1">
    <location>
        <position position="242"/>
    </location>
    <ligand>
        <name>Mg(2+)</name>
        <dbReference type="ChEBI" id="CHEBI:18420"/>
    </ligand>
</feature>
<feature type="binding site" evidence="1">
    <location>
        <position position="286"/>
    </location>
    <ligand>
        <name>Mg(2+)</name>
        <dbReference type="ChEBI" id="CHEBI:18420"/>
    </ligand>
</feature>
<feature type="binding site" evidence="1">
    <location>
        <position position="313"/>
    </location>
    <ligand>
        <name>Mg(2+)</name>
        <dbReference type="ChEBI" id="CHEBI:18420"/>
    </ligand>
</feature>
<feature type="binding site" evidence="1">
    <location>
        <position position="338"/>
    </location>
    <ligand>
        <name>(2R)-2-phosphoglycerate</name>
        <dbReference type="ChEBI" id="CHEBI:58289"/>
    </ligand>
</feature>
<feature type="binding site" evidence="1">
    <location>
        <position position="367"/>
    </location>
    <ligand>
        <name>(2R)-2-phosphoglycerate</name>
        <dbReference type="ChEBI" id="CHEBI:58289"/>
    </ligand>
</feature>
<feature type="binding site" evidence="1">
    <location>
        <position position="368"/>
    </location>
    <ligand>
        <name>(2R)-2-phosphoglycerate</name>
        <dbReference type="ChEBI" id="CHEBI:58289"/>
    </ligand>
</feature>
<feature type="binding site" evidence="1">
    <location>
        <position position="389"/>
    </location>
    <ligand>
        <name>(2R)-2-phosphoglycerate</name>
        <dbReference type="ChEBI" id="CHEBI:58289"/>
    </ligand>
</feature>
<reference key="1">
    <citation type="journal article" date="2006" name="PLoS Genet.">
        <title>Who ate whom? Adaptive Helicobacter genomic changes that accompanied a host jump from early humans to large felines.</title>
        <authorList>
            <person name="Eppinger M."/>
            <person name="Baar C."/>
            <person name="Linz B."/>
            <person name="Raddatz G."/>
            <person name="Lanz C."/>
            <person name="Keller H."/>
            <person name="Morelli G."/>
            <person name="Gressmann H."/>
            <person name="Achtman M."/>
            <person name="Schuster S.C."/>
        </authorList>
    </citation>
    <scope>NUCLEOTIDE SEQUENCE [LARGE SCALE GENOMIC DNA]</scope>
    <source>
        <strain>Sheeba</strain>
    </source>
</reference>
<comment type="function">
    <text evidence="1">Catalyzes the reversible conversion of 2-phosphoglycerate (2-PG) into phosphoenolpyruvate (PEP). It is essential for the degradation of carbohydrates via glycolysis.</text>
</comment>
<comment type="catalytic activity">
    <reaction evidence="1">
        <text>(2R)-2-phosphoglycerate = phosphoenolpyruvate + H2O</text>
        <dbReference type="Rhea" id="RHEA:10164"/>
        <dbReference type="ChEBI" id="CHEBI:15377"/>
        <dbReference type="ChEBI" id="CHEBI:58289"/>
        <dbReference type="ChEBI" id="CHEBI:58702"/>
        <dbReference type="EC" id="4.2.1.11"/>
    </reaction>
</comment>
<comment type="cofactor">
    <cofactor evidence="1">
        <name>Mg(2+)</name>
        <dbReference type="ChEBI" id="CHEBI:18420"/>
    </cofactor>
    <text evidence="1">Binds a second Mg(2+) ion via substrate during catalysis.</text>
</comment>
<comment type="pathway">
    <text evidence="1">Carbohydrate degradation; glycolysis; pyruvate from D-glyceraldehyde 3-phosphate: step 4/5.</text>
</comment>
<comment type="subcellular location">
    <subcellularLocation>
        <location evidence="1">Cytoplasm</location>
    </subcellularLocation>
    <subcellularLocation>
        <location evidence="1">Secreted</location>
    </subcellularLocation>
    <subcellularLocation>
        <location evidence="1">Cell surface</location>
    </subcellularLocation>
    <text evidence="1">Fractions of enolase are present in both the cytoplasm and on the cell surface.</text>
</comment>
<comment type="similarity">
    <text evidence="1">Belongs to the enolase family.</text>
</comment>
<gene>
    <name evidence="1" type="primary">eno</name>
    <name type="ordered locus">Hac_0337</name>
</gene>
<name>ENO_HELAH</name>
<organism>
    <name type="scientific">Helicobacter acinonychis (strain Sheeba)</name>
    <dbReference type="NCBI Taxonomy" id="382638"/>
    <lineage>
        <taxon>Bacteria</taxon>
        <taxon>Pseudomonadati</taxon>
        <taxon>Campylobacterota</taxon>
        <taxon>Epsilonproteobacteria</taxon>
        <taxon>Campylobacterales</taxon>
        <taxon>Helicobacteraceae</taxon>
        <taxon>Helicobacter</taxon>
    </lineage>
</organism>
<accession>Q17YV0</accession>
<sequence length="426" mass="46544">MLTIKDIHALEVMDSRGNPTIQASVILSDNTKASAIVSSGASTGKREALELRDNDKTRFLGKGVLRACENVNTVIKHNLIGLEAINQAFVDGRLKALDGTPNYANLGANASLGVSMALARASAKALNMPLYRYLGGANALTLPVPMLNIINGGSHANNSIDFQEYMIMPLGFESFKEALRASAEVYHTLKKLLDEKNQLTSVGDEGGFAPNFKNNVEPLEVISQAIEKAGYKLGEEIALALDVASSELVDEHFNYHLKGENKILNAQELVAYYKELVAKYPIVSIEDGLSEDDWEGWAFLSKELGRQIQLVGDDLFVTNASILQKGIKKNIANAILIKPNQIGTISETLETIRLAKHHAYQCVMSHRSGESEDSFIADFAVALNTGEIKTGSTARSERIAKYNRLLEIEHELKGGIYIGKELFKHG</sequence>